<keyword id="KW-0227">DNA damage</keyword>
<keyword id="KW-0234">DNA repair</keyword>
<keyword id="KW-0235">DNA replication</keyword>
<keyword id="KW-0255">Endonuclease</keyword>
<keyword id="KW-0269">Exonuclease</keyword>
<keyword id="KW-0378">Hydrolase</keyword>
<keyword id="KW-0460">Magnesium</keyword>
<keyword id="KW-0479">Metal-binding</keyword>
<keyword id="KW-0496">Mitochondrion</keyword>
<keyword id="KW-0540">Nuclease</keyword>
<keyword id="KW-0539">Nucleus</keyword>
<keyword id="KW-0597">Phosphoprotein</keyword>
<proteinExistence type="inferred from homology"/>
<protein>
    <recommendedName>
        <fullName evidence="1">Flap endonuclease 1</fullName>
        <shortName evidence="1">FEN-1</shortName>
        <ecNumber evidence="1">3.1.-.-</ecNumber>
    </recommendedName>
    <alternativeName>
        <fullName evidence="1">Flap structure-specific endonuclease 1</fullName>
    </alternativeName>
</protein>
<name>FEN1_TRYB9</name>
<accession>C9ZKW4</accession>
<comment type="function">
    <text evidence="1">Structure-specific nuclease with 5'-flap endonuclease and 5'-3' exonuclease activities involved in DNA replication and repair. During DNA replication, cleaves the 5'-overhanging flap structure that is generated by displacement synthesis when DNA polymerase encounters the 5'-end of a downstream Okazaki fragment. It enters the flap from the 5'-end and then tracks to cleave the flap base, leaving a nick for ligation. Also involved in the long patch base excision repair (LP-BER) pathway, by cleaving within the apurinic/apyrimidinic (AP) site-terminated flap. Acts as a genome stabilization factor that prevents flaps from equilibrating into structures that lead to duplications and deletions. Also possesses 5'-3' exonuclease activity on nicked or gapped double-stranded DNA, and exhibits RNase H activity. Also involved in replication and repair of rDNA and in repairing mitochondrial DNA.</text>
</comment>
<comment type="cofactor">
    <cofactor evidence="1">
        <name>Mg(2+)</name>
        <dbReference type="ChEBI" id="CHEBI:18420"/>
    </cofactor>
    <text evidence="1">Binds 2 magnesium ions per subunit. They probably participate in the reaction catalyzed by the enzyme. May bind an additional third magnesium ion after substrate binding.</text>
</comment>
<comment type="subunit">
    <text evidence="1">Interacts with PCNA. Three molecules of FEN1 bind to one PCNA trimer with each molecule binding to one PCNA monomer. PCNA stimulates the nuclease activity without altering cleavage specificity.</text>
</comment>
<comment type="subcellular location">
    <subcellularLocation>
        <location evidence="1">Nucleus</location>
        <location evidence="1">Nucleolus</location>
    </subcellularLocation>
    <subcellularLocation>
        <location evidence="1">Nucleus</location>
        <location evidence="1">Nucleoplasm</location>
    </subcellularLocation>
    <subcellularLocation>
        <location evidence="1">Mitochondrion</location>
    </subcellularLocation>
    <text evidence="1">Resides mostly in the nucleoli and relocalizes to the nucleoplasm upon DNA damage.</text>
</comment>
<comment type="PTM">
    <text evidence="1">Phosphorylated. Phosphorylation upon DNA damage induces relocalization to the nuclear plasma.</text>
</comment>
<comment type="similarity">
    <text evidence="1">Belongs to the XPG/RAD2 endonuclease family. FEN1 subfamily.</text>
</comment>
<organism>
    <name type="scientific">Trypanosoma brucei gambiense (strain MHOM/CI/86/DAL972)</name>
    <dbReference type="NCBI Taxonomy" id="679716"/>
    <lineage>
        <taxon>Eukaryota</taxon>
        <taxon>Discoba</taxon>
        <taxon>Euglenozoa</taxon>
        <taxon>Kinetoplastea</taxon>
        <taxon>Metakinetoplastina</taxon>
        <taxon>Trypanosomatida</taxon>
        <taxon>Trypanosomatidae</taxon>
        <taxon>Trypanosoma</taxon>
    </lineage>
</organism>
<gene>
    <name evidence="1" type="primary">FEN1</name>
    <name type="ORF">TbgDal_III460</name>
</gene>
<feature type="chain" id="PRO_0000403550" description="Flap endonuclease 1">
    <location>
        <begin position="1"/>
        <end position="393"/>
    </location>
</feature>
<feature type="region of interest" description="N-domain">
    <location>
        <begin position="1"/>
        <end position="108"/>
    </location>
</feature>
<feature type="region of interest" description="Disordered" evidence="2">
    <location>
        <begin position="99"/>
        <end position="127"/>
    </location>
</feature>
<feature type="region of interest" description="I-domain">
    <location>
        <begin position="126"/>
        <end position="257"/>
    </location>
</feature>
<feature type="region of interest" description="Interaction with PCNA" evidence="1">
    <location>
        <begin position="340"/>
        <end position="348"/>
    </location>
</feature>
<feature type="region of interest" description="Disordered" evidence="2">
    <location>
        <begin position="358"/>
        <end position="393"/>
    </location>
</feature>
<feature type="compositionally biased region" description="Basic and acidic residues" evidence="2">
    <location>
        <begin position="99"/>
        <end position="120"/>
    </location>
</feature>
<feature type="compositionally biased region" description="Basic residues" evidence="2">
    <location>
        <begin position="384"/>
        <end position="393"/>
    </location>
</feature>
<feature type="binding site" evidence="1">
    <location>
        <position position="34"/>
    </location>
    <ligand>
        <name>Mg(2+)</name>
        <dbReference type="ChEBI" id="CHEBI:18420"/>
        <label>1</label>
    </ligand>
</feature>
<feature type="binding site" evidence="1">
    <location>
        <position position="74"/>
    </location>
    <ligand>
        <name>DNA</name>
        <dbReference type="ChEBI" id="CHEBI:16991"/>
    </ligand>
</feature>
<feature type="binding site" evidence="1">
    <location>
        <position position="90"/>
    </location>
    <ligand>
        <name>Mg(2+)</name>
        <dbReference type="ChEBI" id="CHEBI:18420"/>
        <label>1</label>
    </ligand>
</feature>
<feature type="binding site" evidence="1">
    <location>
        <position position="162"/>
    </location>
    <ligand>
        <name>DNA</name>
        <dbReference type="ChEBI" id="CHEBI:16991"/>
    </ligand>
</feature>
<feature type="binding site" evidence="1">
    <location>
        <position position="162"/>
    </location>
    <ligand>
        <name>Mg(2+)</name>
        <dbReference type="ChEBI" id="CHEBI:18420"/>
        <label>1</label>
    </ligand>
</feature>
<feature type="binding site" evidence="1">
    <location>
        <position position="164"/>
    </location>
    <ligand>
        <name>Mg(2+)</name>
        <dbReference type="ChEBI" id="CHEBI:18420"/>
        <label>1</label>
    </ligand>
</feature>
<feature type="binding site" evidence="1">
    <location>
        <position position="183"/>
    </location>
    <ligand>
        <name>Mg(2+)</name>
        <dbReference type="ChEBI" id="CHEBI:18420"/>
        <label>2</label>
    </ligand>
</feature>
<feature type="binding site" evidence="1">
    <location>
        <position position="185"/>
    </location>
    <ligand>
        <name>Mg(2+)</name>
        <dbReference type="ChEBI" id="CHEBI:18420"/>
        <label>2</label>
    </ligand>
</feature>
<feature type="binding site" evidence="1">
    <location>
        <position position="235"/>
    </location>
    <ligand>
        <name>DNA</name>
        <dbReference type="ChEBI" id="CHEBI:16991"/>
    </ligand>
</feature>
<feature type="binding site" evidence="1">
    <location>
        <position position="237"/>
    </location>
    <ligand>
        <name>DNA</name>
        <dbReference type="ChEBI" id="CHEBI:16991"/>
    </ligand>
</feature>
<feature type="binding site" evidence="1">
    <location>
        <position position="237"/>
    </location>
    <ligand>
        <name>Mg(2+)</name>
        <dbReference type="ChEBI" id="CHEBI:18420"/>
        <label>2</label>
    </ligand>
</feature>
<dbReference type="EC" id="3.1.-.-" evidence="1"/>
<dbReference type="EMBL" id="FN554966">
    <property type="protein sequence ID" value="CBH09707.1"/>
    <property type="molecule type" value="Genomic_DNA"/>
</dbReference>
<dbReference type="RefSeq" id="XP_011772000.1">
    <property type="nucleotide sequence ID" value="XM_011773698.1"/>
</dbReference>
<dbReference type="SMR" id="C9ZKW4"/>
<dbReference type="GeneID" id="23859259"/>
<dbReference type="KEGG" id="tbg:TbgDal_III460"/>
<dbReference type="VEuPathDB" id="TriTrypDB:Tbg972.3.460"/>
<dbReference type="OrthoDB" id="7574at5690"/>
<dbReference type="Proteomes" id="UP000002316">
    <property type="component" value="Chromosome 3"/>
</dbReference>
<dbReference type="GO" id="GO:0005739">
    <property type="term" value="C:mitochondrion"/>
    <property type="evidence" value="ECO:0007669"/>
    <property type="project" value="UniProtKB-SubCell"/>
</dbReference>
<dbReference type="GO" id="GO:0005730">
    <property type="term" value="C:nucleolus"/>
    <property type="evidence" value="ECO:0007669"/>
    <property type="project" value="UniProtKB-SubCell"/>
</dbReference>
<dbReference type="GO" id="GO:0005654">
    <property type="term" value="C:nucleoplasm"/>
    <property type="evidence" value="ECO:0007669"/>
    <property type="project" value="UniProtKB-SubCell"/>
</dbReference>
<dbReference type="GO" id="GO:0008409">
    <property type="term" value="F:5'-3' exonuclease activity"/>
    <property type="evidence" value="ECO:0007669"/>
    <property type="project" value="UniProtKB-UniRule"/>
</dbReference>
<dbReference type="GO" id="GO:0017108">
    <property type="term" value="F:5'-flap endonuclease activity"/>
    <property type="evidence" value="ECO:0007669"/>
    <property type="project" value="UniProtKB-UniRule"/>
</dbReference>
<dbReference type="GO" id="GO:0003677">
    <property type="term" value="F:DNA binding"/>
    <property type="evidence" value="ECO:0007669"/>
    <property type="project" value="UniProtKB-UniRule"/>
</dbReference>
<dbReference type="GO" id="GO:0000287">
    <property type="term" value="F:magnesium ion binding"/>
    <property type="evidence" value="ECO:0007669"/>
    <property type="project" value="UniProtKB-UniRule"/>
</dbReference>
<dbReference type="GO" id="GO:0006284">
    <property type="term" value="P:base-excision repair"/>
    <property type="evidence" value="ECO:0007669"/>
    <property type="project" value="UniProtKB-UniRule"/>
</dbReference>
<dbReference type="GO" id="GO:0043137">
    <property type="term" value="P:DNA replication, removal of RNA primer"/>
    <property type="evidence" value="ECO:0007669"/>
    <property type="project" value="UniProtKB-UniRule"/>
</dbReference>
<dbReference type="CDD" id="cd09907">
    <property type="entry name" value="H3TH_FEN1-Euk"/>
    <property type="match status" value="1"/>
</dbReference>
<dbReference type="CDD" id="cd09867">
    <property type="entry name" value="PIN_FEN1"/>
    <property type="match status" value="1"/>
</dbReference>
<dbReference type="FunFam" id="1.10.150.20:FF:000009">
    <property type="entry name" value="Flap endonuclease 1"/>
    <property type="match status" value="1"/>
</dbReference>
<dbReference type="FunFam" id="3.40.50.1010:FF:000016">
    <property type="entry name" value="Flap endonuclease 1"/>
    <property type="match status" value="1"/>
</dbReference>
<dbReference type="Gene3D" id="1.10.150.20">
    <property type="entry name" value="5' to 3' exonuclease, C-terminal subdomain"/>
    <property type="match status" value="1"/>
</dbReference>
<dbReference type="Gene3D" id="3.40.50.1010">
    <property type="entry name" value="5'-nuclease"/>
    <property type="match status" value="1"/>
</dbReference>
<dbReference type="HAMAP" id="MF_00614">
    <property type="entry name" value="Fen"/>
    <property type="match status" value="1"/>
</dbReference>
<dbReference type="InterPro" id="IPR036279">
    <property type="entry name" value="5-3_exonuclease_C_sf"/>
</dbReference>
<dbReference type="InterPro" id="IPR023426">
    <property type="entry name" value="Flap_endonuc"/>
</dbReference>
<dbReference type="InterPro" id="IPR008918">
    <property type="entry name" value="HhH2"/>
</dbReference>
<dbReference type="InterPro" id="IPR029060">
    <property type="entry name" value="PIN-like_dom_sf"/>
</dbReference>
<dbReference type="InterPro" id="IPR006086">
    <property type="entry name" value="XPG-I_dom"/>
</dbReference>
<dbReference type="InterPro" id="IPR006084">
    <property type="entry name" value="XPG/Rad2"/>
</dbReference>
<dbReference type="InterPro" id="IPR019974">
    <property type="entry name" value="XPG_CS"/>
</dbReference>
<dbReference type="InterPro" id="IPR006085">
    <property type="entry name" value="XPG_DNA_repair_N"/>
</dbReference>
<dbReference type="PANTHER" id="PTHR11081:SF9">
    <property type="entry name" value="FLAP ENDONUCLEASE 1"/>
    <property type="match status" value="1"/>
</dbReference>
<dbReference type="PANTHER" id="PTHR11081">
    <property type="entry name" value="FLAP ENDONUCLEASE FAMILY MEMBER"/>
    <property type="match status" value="1"/>
</dbReference>
<dbReference type="Pfam" id="PF00867">
    <property type="entry name" value="XPG_I"/>
    <property type="match status" value="1"/>
</dbReference>
<dbReference type="Pfam" id="PF00752">
    <property type="entry name" value="XPG_N"/>
    <property type="match status" value="1"/>
</dbReference>
<dbReference type="PRINTS" id="PR00853">
    <property type="entry name" value="XPGRADSUPER"/>
</dbReference>
<dbReference type="SMART" id="SM00279">
    <property type="entry name" value="HhH2"/>
    <property type="match status" value="1"/>
</dbReference>
<dbReference type="SMART" id="SM00484">
    <property type="entry name" value="XPGI"/>
    <property type="match status" value="1"/>
</dbReference>
<dbReference type="SMART" id="SM00485">
    <property type="entry name" value="XPGN"/>
    <property type="match status" value="1"/>
</dbReference>
<dbReference type="SUPFAM" id="SSF47807">
    <property type="entry name" value="5' to 3' exonuclease, C-terminal subdomain"/>
    <property type="match status" value="1"/>
</dbReference>
<dbReference type="SUPFAM" id="SSF88723">
    <property type="entry name" value="PIN domain-like"/>
    <property type="match status" value="1"/>
</dbReference>
<dbReference type="PROSITE" id="PS00841">
    <property type="entry name" value="XPG_1"/>
    <property type="match status" value="1"/>
</dbReference>
<dbReference type="PROSITE" id="PS00842">
    <property type="entry name" value="XPG_2"/>
    <property type="match status" value="1"/>
</dbReference>
<reference key="1">
    <citation type="journal article" date="2010" name="PLoS Negl. Trop. Dis.">
        <title>The genome sequence of Trypanosoma brucei gambiense, causative agent of chronic human african trypanosomiasis.</title>
        <authorList>
            <person name="Jackson A.P."/>
            <person name="Sanders M."/>
            <person name="Berry A."/>
            <person name="McQuillan J."/>
            <person name="Aslett M.A."/>
            <person name="Quail M.A."/>
            <person name="Chukualim B."/>
            <person name="Capewell P."/>
            <person name="MacLeod A."/>
            <person name="Melville S.E."/>
            <person name="Gibson W."/>
            <person name="Barry J.D."/>
            <person name="Berriman M."/>
            <person name="Hertz-Fowler C."/>
        </authorList>
    </citation>
    <scope>NUCLEOTIDE SEQUENCE [LARGE SCALE GENOMIC DNA]</scope>
    <source>
        <strain>MHOM/CI/86/DAL972</strain>
    </source>
</reference>
<evidence type="ECO:0000255" key="1">
    <source>
        <dbReference type="HAMAP-Rule" id="MF_03140"/>
    </source>
</evidence>
<evidence type="ECO:0000256" key="2">
    <source>
        <dbReference type="SAM" id="MobiDB-lite"/>
    </source>
</evidence>
<sequence length="393" mass="44363">MGVLGLSKLLYDRTPGAIKEQELKVYFGRRIAIDASMAVYQFVIAMKGFQEGQSVELTNEAGDVTSHLSGIFFRTLRMIDEGLRPIYVFDGKPPTLKASELESRRQRAEDAKHEFEKAKEEGDDEAMEKMSKRMVRVGRDQMEEVKTLLRLMGIPVVQAPSEAEAQCAELVKKNKAWAVGTEDMDALAFGSRVMLRHLTYGEAKKRPIAEYHLDEILEASGFSMQQFIDLCILLGCDYVPRISGIGPHKAWEGIKKYGSLEAFIESLDGTRYVVPEEFNYKDARNFFLEPEVTPGEEIDIQFREPDEEGLIKFLVDEKLFSKERVLKGIQRLRDALTKKTQGRLDQFFTITKPQKQVNSEASTAGTKRNRGAVALPGVLQRKSSSGHKKAVKK</sequence>